<feature type="signal peptide" evidence="2">
    <location>
        <begin position="1"/>
        <end position="22"/>
    </location>
</feature>
<feature type="chain" id="PRO_0000003516" description="Complement C1q subcomponent subunit A">
    <location>
        <begin position="23"/>
        <end position="244"/>
    </location>
</feature>
<feature type="domain" description="Collagen-like">
    <location>
        <begin position="31"/>
        <end position="109"/>
    </location>
</feature>
<feature type="domain" description="C1q" evidence="3">
    <location>
        <begin position="110"/>
        <end position="244"/>
    </location>
</feature>
<feature type="region of interest" description="Disordered" evidence="4">
    <location>
        <begin position="28"/>
        <end position="94"/>
    </location>
</feature>
<feature type="compositionally biased region" description="Low complexity" evidence="4">
    <location>
        <begin position="79"/>
        <end position="94"/>
    </location>
</feature>
<feature type="binding site" evidence="1">
    <location>
        <position position="198"/>
    </location>
    <ligand>
        <name>Ca(2+)</name>
        <dbReference type="ChEBI" id="CHEBI:29108"/>
    </ligand>
</feature>
<feature type="modified residue" description="4-hydroxyproline" evidence="1">
    <location>
        <position position="39"/>
    </location>
</feature>
<feature type="modified residue" description="4-hydroxyproline" evidence="1">
    <location>
        <position position="45"/>
    </location>
</feature>
<feature type="modified residue" description="5-hydroxylysine" evidence="1">
    <location>
        <position position="48"/>
    </location>
</feature>
<feature type="modified residue" description="4-hydroxyproline" evidence="1">
    <location>
        <position position="54"/>
    </location>
</feature>
<feature type="modified residue" description="4-hydroxyproline" evidence="1">
    <location>
        <position position="57"/>
    </location>
</feature>
<feature type="modified residue" description="5-hydroxylysine" evidence="1">
    <location>
        <position position="67"/>
    </location>
</feature>
<feature type="modified residue" description="4-hydroxyproline" evidence="1">
    <location>
        <position position="73"/>
    </location>
</feature>
<feature type="modified residue" description="4-hydroxyproline" evidence="1">
    <location>
        <position position="79"/>
    </location>
</feature>
<feature type="modified residue" description="4-hydroxyproline" evidence="1">
    <location>
        <position position="85"/>
    </location>
</feature>
<feature type="modified residue" description="5-hydroxylysine" evidence="1">
    <location>
        <position position="100"/>
    </location>
</feature>
<feature type="glycosylation site" description="O-linked (Gal...) hydroxylysine" evidence="1">
    <location>
        <position position="48"/>
    </location>
</feature>
<feature type="glycosylation site" description="O-linked (Gal...) hydroxylysine" evidence="1">
    <location>
        <position position="67"/>
    </location>
</feature>
<feature type="glycosylation site" description="O-linked (Gal...) hydroxylysine" evidence="1">
    <location>
        <position position="100"/>
    </location>
</feature>
<feature type="glycosylation site" description="N-linked (GlcNAc...) asparagine" evidence="2">
    <location>
        <position position="146"/>
    </location>
</feature>
<feature type="disulfide bond" description="Interchain (with C-26 in B chain)" evidence="1">
    <location>
        <position position="26"/>
    </location>
</feature>
<feature type="disulfide bond" evidence="1">
    <location>
        <begin position="172"/>
        <end position="189"/>
    </location>
</feature>
<name>C1QA_BOVIN</name>
<proteinExistence type="evidence at transcript level"/>
<comment type="function">
    <text evidence="1">Core component of the complement C1 complex, a multiprotein complex that initiates the classical pathway of the complement system, a cascade of proteins that leads to phagocytosis and breakdown of pathogens and signaling that strengthens the adaptive immune system. The classical complement pathway is initiated by the C1Q subcomplex of the C1 complex, which specifically binds IgG or IgM immunoglobulins complexed with antigens, forming antigen-antibody complexes on the surface of pathogens: C1QA, together with C1QB and C1QC, specifically recognizes and binds the Fc regions of IgG or IgM via its C1q domain. Immunoglobulin-binding activates the proenzyme C1R, which cleaves C1S, initiating the proteolytic cascade of the complement system. The C1Q subcomplex is activated by a hexamer of IgG complexed with antigens, while it is activated by a pentameric IgM. The C1Q subcomplex also recognizes and binds phosphatidylserine exposed on the surface of cells undergoing programmed cell death, possibly promoting activation of the complement system.</text>
</comment>
<comment type="activity regulation">
    <text evidence="1">The C1Q subcomplex is inhibited by sulfated molecules, such as triterpenoid sulfates, heparan sulfate, or chondroitin sulfates.</text>
</comment>
<comment type="subunit">
    <text evidence="1">Core component of the complement C1 complex, a calcium-dependent complex composed of 1 molecule of the C1Q subcomplex, 2 molecules of C1R and 2 molecules of C1S. The C1Q subcomplex is composed 18 subunits: 3 chains of C1QA, C1QB, and C1QC trimerize to form 6 collagen-like triple helices connected to six globular ligand-recognition modules (C1q domain). Interacts with CR1 (via Sushi 24 and Sushi 25 domains). Interacts (via C-terminus) with CD33; this interaction activates CD33 inhibitory motifs.</text>
</comment>
<comment type="subcellular location">
    <subcellularLocation>
        <location evidence="1">Secreted</location>
    </subcellularLocation>
    <subcellularLocation>
        <location evidence="1">Cell surface</location>
    </subcellularLocation>
    <text evidence="1">Specifically binds IgG or IgM immunoglobulins complexed with antigens, forming antigen-antibody complexes on the surface of pathogens.</text>
</comment>
<comment type="domain">
    <text evidence="1">The C1q domain is the ligand-recognition domain, which specifically recognizes and binds the Fc regions of IgG or IgM immunoglobulins.</text>
</comment>
<comment type="domain">
    <text evidence="1">The collagen-like domain interacts with C1R and C1S proenzymes.</text>
</comment>
<comment type="PTM">
    <text evidence="1">O-linked glycans are assumed to be the Glc-Gal disaccharides typically found as secondary modifications of hydroxylated lysines in collagen-like domains.</text>
</comment>
<reference key="1">
    <citation type="journal article" date="2005" name="BMC Genomics">
        <title>Characterization of 954 bovine full-CDS cDNA sequences.</title>
        <authorList>
            <person name="Harhay G.P."/>
            <person name="Sonstegard T.S."/>
            <person name="Keele J.W."/>
            <person name="Heaton M.P."/>
            <person name="Clawson M.L."/>
            <person name="Snelling W.M."/>
            <person name="Wiedmann R.T."/>
            <person name="Van Tassell C.P."/>
            <person name="Smith T.P.L."/>
        </authorList>
    </citation>
    <scope>NUCLEOTIDE SEQUENCE [LARGE SCALE MRNA]</scope>
</reference>
<reference key="2">
    <citation type="submission" date="2005-01" db="EMBL/GenBank/DDBJ databases">
        <title>Analysis of sequences obtained from constructed full-length bovine cDNA libraries.</title>
        <authorList>
            <person name="Yu J."/>
            <person name="Meng Y."/>
            <person name="Wang Z."/>
            <person name="Hansen C."/>
            <person name="Li C."/>
            <person name="Moore S.S."/>
        </authorList>
    </citation>
    <scope>NUCLEOTIDE SEQUENCE [LARGE SCALE MRNA]</scope>
    <source>
        <tissue>Lymphoid epithelium</tissue>
    </source>
</reference>
<reference key="3">
    <citation type="submission" date="2005-09" db="EMBL/GenBank/DDBJ databases">
        <authorList>
            <consortium name="NIH - Mammalian Gene Collection (MGC) project"/>
        </authorList>
    </citation>
    <scope>NUCLEOTIDE SEQUENCE [LARGE SCALE MRNA]</scope>
    <source>
        <strain>Crossbred X Angus</strain>
        <tissue>Ileum</tissue>
    </source>
</reference>
<dbReference type="EMBL" id="BT020977">
    <property type="protein sequence ID" value="AAX08994.1"/>
    <property type="molecule type" value="mRNA"/>
</dbReference>
<dbReference type="EMBL" id="AY911382">
    <property type="protein sequence ID" value="AAW82145.1"/>
    <property type="molecule type" value="mRNA"/>
</dbReference>
<dbReference type="EMBL" id="BC105345">
    <property type="protein sequence ID" value="AAI05346.1"/>
    <property type="molecule type" value="mRNA"/>
</dbReference>
<dbReference type="RefSeq" id="NP_001014945.1">
    <property type="nucleotide sequence ID" value="NM_001014945.2"/>
</dbReference>
<dbReference type="RefSeq" id="XP_005203271.1">
    <property type="nucleotide sequence ID" value="XM_005203214.3"/>
</dbReference>
<dbReference type="RefSeq" id="XP_059731360.1">
    <property type="nucleotide sequence ID" value="XM_059875377.1"/>
</dbReference>
<dbReference type="RefSeq" id="XP_059731366.1">
    <property type="nucleotide sequence ID" value="XM_059875383.1"/>
</dbReference>
<dbReference type="SMR" id="Q5E9E3"/>
<dbReference type="FunCoup" id="Q5E9E3">
    <property type="interactions" value="205"/>
</dbReference>
<dbReference type="STRING" id="9913.ENSBTAP00000009415"/>
<dbReference type="GlyCosmos" id="Q5E9E3">
    <property type="glycosylation" value="4 sites, No reported glycans"/>
</dbReference>
<dbReference type="GlyGen" id="Q5E9E3">
    <property type="glycosylation" value="4 sites"/>
</dbReference>
<dbReference type="PaxDb" id="9913-ENSBTAP00000009415"/>
<dbReference type="Ensembl" id="ENSBTAT00000040146.5">
    <property type="protein sequence ID" value="ENSBTAP00000039925.3"/>
    <property type="gene ID" value="ENSBTAG00000007153.5"/>
</dbReference>
<dbReference type="GeneID" id="534961"/>
<dbReference type="KEGG" id="bta:534961"/>
<dbReference type="CTD" id="712"/>
<dbReference type="VEuPathDB" id="HostDB:ENSBTAG00000007153"/>
<dbReference type="VGNC" id="VGNC:26616">
    <property type="gene designation" value="C1QA"/>
</dbReference>
<dbReference type="eggNOG" id="ENOG502RZM2">
    <property type="taxonomic scope" value="Eukaryota"/>
</dbReference>
<dbReference type="GeneTree" id="ENSGT00940000162143"/>
<dbReference type="HOGENOM" id="CLU_001074_0_2_1"/>
<dbReference type="InParanoid" id="Q5E9E3"/>
<dbReference type="OMA" id="MEGPQGW"/>
<dbReference type="OrthoDB" id="6343173at2759"/>
<dbReference type="TreeFam" id="TF329591"/>
<dbReference type="Reactome" id="R-BTA-166663">
    <property type="pathway name" value="Initial triggering of complement"/>
</dbReference>
<dbReference type="Reactome" id="R-BTA-173623">
    <property type="pathway name" value="Classical antibody-mediated complement activation"/>
</dbReference>
<dbReference type="Reactome" id="R-BTA-977606">
    <property type="pathway name" value="Regulation of Complement cascade"/>
</dbReference>
<dbReference type="Proteomes" id="UP000009136">
    <property type="component" value="Chromosome 2"/>
</dbReference>
<dbReference type="Bgee" id="ENSBTAG00000007153">
    <property type="expression patterns" value="Expressed in lung and 107 other cell types or tissues"/>
</dbReference>
<dbReference type="GO" id="GO:0005581">
    <property type="term" value="C:collagen trimer"/>
    <property type="evidence" value="ECO:0007669"/>
    <property type="project" value="UniProtKB-KW"/>
</dbReference>
<dbReference type="GO" id="GO:0005576">
    <property type="term" value="C:extracellular region"/>
    <property type="evidence" value="ECO:0007669"/>
    <property type="project" value="UniProtKB-SubCell"/>
</dbReference>
<dbReference type="GO" id="GO:0006958">
    <property type="term" value="P:complement activation, classical pathway"/>
    <property type="evidence" value="ECO:0007669"/>
    <property type="project" value="UniProtKB-KW"/>
</dbReference>
<dbReference type="GO" id="GO:0045087">
    <property type="term" value="P:innate immune response"/>
    <property type="evidence" value="ECO:0007669"/>
    <property type="project" value="UniProtKB-KW"/>
</dbReference>
<dbReference type="FunFam" id="2.60.120.40:FF:000001">
    <property type="entry name" value="Complement C1q B chain"/>
    <property type="match status" value="1"/>
</dbReference>
<dbReference type="Gene3D" id="2.60.120.40">
    <property type="match status" value="1"/>
</dbReference>
<dbReference type="InterPro" id="IPR001073">
    <property type="entry name" value="C1q_dom"/>
</dbReference>
<dbReference type="InterPro" id="IPR008160">
    <property type="entry name" value="Collagen"/>
</dbReference>
<dbReference type="InterPro" id="IPR050392">
    <property type="entry name" value="Collagen/C1q_domain"/>
</dbReference>
<dbReference type="InterPro" id="IPR008983">
    <property type="entry name" value="Tumour_necrosis_fac-like_dom"/>
</dbReference>
<dbReference type="PANTHER" id="PTHR15427:SF26">
    <property type="entry name" value="COMPLEMENT C1Q SUBCOMPONENT SUBUNIT A"/>
    <property type="match status" value="1"/>
</dbReference>
<dbReference type="PANTHER" id="PTHR15427">
    <property type="entry name" value="EMILIN ELASTIN MICROFIBRIL INTERFACE-LOCATED PROTEIN ELASTIN MICROFIBRIL INTERFACER"/>
    <property type="match status" value="1"/>
</dbReference>
<dbReference type="Pfam" id="PF00386">
    <property type="entry name" value="C1q"/>
    <property type="match status" value="1"/>
</dbReference>
<dbReference type="Pfam" id="PF01391">
    <property type="entry name" value="Collagen"/>
    <property type="match status" value="1"/>
</dbReference>
<dbReference type="PRINTS" id="PR00007">
    <property type="entry name" value="COMPLEMNTC1Q"/>
</dbReference>
<dbReference type="SMART" id="SM00110">
    <property type="entry name" value="C1Q"/>
    <property type="match status" value="1"/>
</dbReference>
<dbReference type="SUPFAM" id="SSF49842">
    <property type="entry name" value="TNF-like"/>
    <property type="match status" value="1"/>
</dbReference>
<dbReference type="PROSITE" id="PS50871">
    <property type="entry name" value="C1Q"/>
    <property type="match status" value="1"/>
</dbReference>
<keyword id="KW-0106">Calcium</keyword>
<keyword id="KW-0176">Collagen</keyword>
<keyword id="KW-0180">Complement pathway</keyword>
<keyword id="KW-1015">Disulfide bond</keyword>
<keyword id="KW-0325">Glycoprotein</keyword>
<keyword id="KW-0379">Hydroxylation</keyword>
<keyword id="KW-0391">Immunity</keyword>
<keyword id="KW-0399">Innate immunity</keyword>
<keyword id="KW-0479">Metal-binding</keyword>
<keyword id="KW-1185">Reference proteome</keyword>
<keyword id="KW-0677">Repeat</keyword>
<keyword id="KW-0964">Secreted</keyword>
<keyword id="KW-0732">Signal</keyword>
<organism>
    <name type="scientific">Bos taurus</name>
    <name type="common">Bovine</name>
    <dbReference type="NCBI Taxonomy" id="9913"/>
    <lineage>
        <taxon>Eukaryota</taxon>
        <taxon>Metazoa</taxon>
        <taxon>Chordata</taxon>
        <taxon>Craniata</taxon>
        <taxon>Vertebrata</taxon>
        <taxon>Euteleostomi</taxon>
        <taxon>Mammalia</taxon>
        <taxon>Eutheria</taxon>
        <taxon>Laurasiatheria</taxon>
        <taxon>Artiodactyla</taxon>
        <taxon>Ruminantia</taxon>
        <taxon>Pecora</taxon>
        <taxon>Bovidae</taxon>
        <taxon>Bovinae</taxon>
        <taxon>Bos</taxon>
    </lineage>
</organism>
<sequence>MEAPRGWLVISVLAISLASSVTEDVCRAPDGTHGSAGIPGRPGRPGLKGERGEPGAPAIQTGIRGLKGDQGDPGPPGNPGRMGYPGPSGPMGPAGLPGLKGTKGSPGNIKDQPRPAFSAVGPNSVSRDNVVVFGKVITNQENVYQNNTGRFRCSVPGYYYFTFQVVSNWDICLSIRSSRRDQIQPLGFCDFNSKGFFQVVSGGTVLHLQQGDQVWIEKDPSKGRIYHGSEADSIFSGFLIFPSA</sequence>
<accession>Q5E9E3</accession>
<accession>Q56JV0</accession>
<evidence type="ECO:0000250" key="1">
    <source>
        <dbReference type="UniProtKB" id="P02745"/>
    </source>
</evidence>
<evidence type="ECO:0000255" key="2"/>
<evidence type="ECO:0000255" key="3">
    <source>
        <dbReference type="PROSITE-ProRule" id="PRU00368"/>
    </source>
</evidence>
<evidence type="ECO:0000256" key="4">
    <source>
        <dbReference type="SAM" id="MobiDB-lite"/>
    </source>
</evidence>
<gene>
    <name type="primary">C1QA</name>
</gene>
<protein>
    <recommendedName>
        <fullName>Complement C1q subcomponent subunit A</fullName>
    </recommendedName>
</protein>